<feature type="chain" id="PRO_0000453449" description="Short chain dehydrogenase/reductase AacuD">
    <location>
        <begin position="1"/>
        <end position="284"/>
    </location>
</feature>
<feature type="active site" description="Proton donor" evidence="2">
    <location>
        <position position="166"/>
    </location>
</feature>
<feature type="active site" description="Proton donor" evidence="2">
    <location>
        <position position="180"/>
    </location>
</feature>
<feature type="active site" description="Lowers pKa of active site Tyr" evidence="2">
    <location>
        <position position="184"/>
    </location>
</feature>
<feature type="binding site" evidence="1">
    <location>
        <position position="37"/>
    </location>
    <ligand>
        <name>NADP(+)</name>
        <dbReference type="ChEBI" id="CHEBI:58349"/>
    </ligand>
</feature>
<feature type="binding site" evidence="2">
    <location>
        <position position="180"/>
    </location>
    <ligand>
        <name>NADP(+)</name>
        <dbReference type="ChEBI" id="CHEBI:58349"/>
    </ligand>
</feature>
<feature type="binding site" evidence="2">
    <location>
        <position position="184"/>
    </location>
    <ligand>
        <name>NADP(+)</name>
        <dbReference type="ChEBI" id="CHEBI:58349"/>
    </ligand>
</feature>
<feature type="binding site" evidence="1">
    <location>
        <position position="215"/>
    </location>
    <ligand>
        <name>NADP(+)</name>
        <dbReference type="ChEBI" id="CHEBI:58349"/>
    </ligand>
</feature>
<reference key="1">
    <citation type="journal article" date="2017" name="Genome Biol.">
        <title>Comparative genomics reveals high biological diversity and specific adaptations in the industrially and medically important fungal genus Aspergillus.</title>
        <authorList>
            <person name="de Vries R.P."/>
            <person name="Riley R."/>
            <person name="Wiebenga A."/>
            <person name="Aguilar-Osorio G."/>
            <person name="Amillis S."/>
            <person name="Uchima C.A."/>
            <person name="Anderluh G."/>
            <person name="Asadollahi M."/>
            <person name="Askin M."/>
            <person name="Barry K."/>
            <person name="Battaglia E."/>
            <person name="Bayram O."/>
            <person name="Benocci T."/>
            <person name="Braus-Stromeyer S.A."/>
            <person name="Caldana C."/>
            <person name="Canovas D."/>
            <person name="Cerqueira G.C."/>
            <person name="Chen F."/>
            <person name="Chen W."/>
            <person name="Choi C."/>
            <person name="Clum A."/>
            <person name="Dos Santos R.A."/>
            <person name="Damasio A.R."/>
            <person name="Diallinas G."/>
            <person name="Emri T."/>
            <person name="Fekete E."/>
            <person name="Flipphi M."/>
            <person name="Freyberg S."/>
            <person name="Gallo A."/>
            <person name="Gournas C."/>
            <person name="Habgood R."/>
            <person name="Hainaut M."/>
            <person name="Harispe M.L."/>
            <person name="Henrissat B."/>
            <person name="Hilden K.S."/>
            <person name="Hope R."/>
            <person name="Hossain A."/>
            <person name="Karabika E."/>
            <person name="Karaffa L."/>
            <person name="Karanyi Z."/>
            <person name="Krasevec N."/>
            <person name="Kuo A."/>
            <person name="Kusch H."/>
            <person name="LaButti K."/>
            <person name="Lagendijk E.L."/>
            <person name="Lapidus A."/>
            <person name="Levasseur A."/>
            <person name="Lindquist E."/>
            <person name="Lipzen A."/>
            <person name="Logrieco A.F."/>
            <person name="MacCabe A."/>
            <person name="Maekelae M.R."/>
            <person name="Malavazi I."/>
            <person name="Melin P."/>
            <person name="Meyer V."/>
            <person name="Mielnichuk N."/>
            <person name="Miskei M."/>
            <person name="Molnar A.P."/>
            <person name="Mule G."/>
            <person name="Ngan C.Y."/>
            <person name="Orejas M."/>
            <person name="Orosz E."/>
            <person name="Ouedraogo J.P."/>
            <person name="Overkamp K.M."/>
            <person name="Park H.-S."/>
            <person name="Perrone G."/>
            <person name="Piumi F."/>
            <person name="Punt P.J."/>
            <person name="Ram A.F."/>
            <person name="Ramon A."/>
            <person name="Rauscher S."/>
            <person name="Record E."/>
            <person name="Riano-Pachon D.M."/>
            <person name="Robert V."/>
            <person name="Roehrig J."/>
            <person name="Ruller R."/>
            <person name="Salamov A."/>
            <person name="Salih N.S."/>
            <person name="Samson R.A."/>
            <person name="Sandor E."/>
            <person name="Sanguinetti M."/>
            <person name="Schuetze T."/>
            <person name="Sepcic K."/>
            <person name="Shelest E."/>
            <person name="Sherlock G."/>
            <person name="Sophianopoulou V."/>
            <person name="Squina F.M."/>
            <person name="Sun H."/>
            <person name="Susca A."/>
            <person name="Todd R.B."/>
            <person name="Tsang A."/>
            <person name="Unkles S.E."/>
            <person name="van de Wiele N."/>
            <person name="van Rossen-Uffink D."/>
            <person name="Oliveira J.V."/>
            <person name="Vesth T.C."/>
            <person name="Visser J."/>
            <person name="Yu J.-H."/>
            <person name="Zhou M."/>
            <person name="Andersen M.R."/>
            <person name="Archer D.B."/>
            <person name="Baker S.E."/>
            <person name="Benoit I."/>
            <person name="Brakhage A.A."/>
            <person name="Braus G.H."/>
            <person name="Fischer R."/>
            <person name="Frisvad J.C."/>
            <person name="Goldman G.H."/>
            <person name="Houbraken J."/>
            <person name="Oakley B."/>
            <person name="Pocsi I."/>
            <person name="Scazzocchio C."/>
            <person name="Seiboth B."/>
            <person name="vanKuyk P.A."/>
            <person name="Wortman J."/>
            <person name="Dyer P.S."/>
            <person name="Grigoriev I.V."/>
        </authorList>
    </citation>
    <scope>NUCLEOTIDE SEQUENCE [LARGE SCALE GENOMIC DNA]</scope>
    <source>
        <strain>ATCC 16872 / CBS 172.66 / WB 5094</strain>
    </source>
</reference>
<reference key="2">
    <citation type="journal article" date="2017" name="Neoplasma">
        <title>Secalonic acid- F inhibited cell growth more effectively than 5-fluorouracil on hepatocellular carcinoma in vitro and in vivo.</title>
        <authorList>
            <person name="Gao X."/>
            <person name="Sun H.L."/>
            <person name="Liu D.S."/>
            <person name="Zhang J.R."/>
            <person name="Zhang J."/>
            <person name="Yan M.M."/>
            <person name="Pan X.H."/>
        </authorList>
    </citation>
    <scope>BIOTECHNOLOGY</scope>
</reference>
<reference key="3">
    <citation type="journal article" date="2018" name="Curr. Microbiol.">
        <title>Secondary Metabolites and Their Biological Activity from Aspergillus aculeatus KKU-CT2.</title>
        <authorList>
            <person name="Yodsing N."/>
            <person name="Lekphrom R."/>
            <person name="Sangsopha W."/>
            <person name="Aimi T."/>
            <person name="Boonlue S."/>
        </authorList>
    </citation>
    <scope>BIOTECHNOLOGY</scope>
</reference>
<reference key="4">
    <citation type="journal article" date="2019" name="Chem. Sci.">
        <title>Structure revision of cryptosporioptides and determination of the genetic basis for dimeric xanthone biosynthesis in fungi.</title>
        <authorList>
            <person name="Greco C."/>
            <person name="de Mattos-Shipley K."/>
            <person name="Bailey A.M."/>
            <person name="Mulholland N.P."/>
            <person name="Vincent J.L."/>
            <person name="Willis C.L."/>
            <person name="Cox R.J."/>
            <person name="Simpson T.J."/>
        </authorList>
    </citation>
    <scope>IDENTIFICATION</scope>
    <scope>FUNCTION</scope>
</reference>
<reference key="5">
    <citation type="journal article" date="2019" name="Molecules">
        <title>Secalonic Acid-F, a Novel Mycotoxin, Represses the Progression of Hepatocellular Carcinoma via MARCH1 Regulation of the PI3K/AKT/beta-catenin Signaling Pathway.</title>
        <authorList>
            <person name="Xie L."/>
            <person name="Li M."/>
            <person name="Liu D."/>
            <person name="Wang X."/>
            <person name="Wang P."/>
            <person name="Dai H."/>
            <person name="Yang W."/>
            <person name="Liu W."/>
            <person name="Hu X."/>
            <person name="Zhao M."/>
        </authorList>
    </citation>
    <scope>BIOTECHNOLOGY</scope>
</reference>
<reference key="6">
    <citation type="journal article" date="2020" name="ACS Omega">
        <title>Discovery of a Secalonic Acid Derivative from Aspergillus aculeatus, an Endophyte of Rosa damascena Mill., Triggers Apoptosis in MDA-MB-231 Triple Negative Breast Cancer Cells.</title>
        <authorList>
            <person name="Farooq S."/>
            <person name="Qayum A."/>
            <person name="Nalli Y."/>
            <person name="Lauro G."/>
            <person name="Chini M.G."/>
            <person name="Bifulco G."/>
            <person name="Chaubey A."/>
            <person name="Singh S.K."/>
            <person name="Riyaz-Ul-Hassan S."/>
            <person name="Ali A."/>
        </authorList>
    </citation>
    <scope>BIOTECHNOLOGY</scope>
</reference>
<reference key="7">
    <citation type="journal article" date="2021" name="J. Nat. Prod.">
        <title>Heterologous biosynthesis of tetrahydroxanthone dimers: determination of key factors for selective or divergent synthesis.</title>
        <authorList>
            <person name="Wei X."/>
            <person name="Chen X."/>
            <person name="Chen L."/>
            <person name="Yan D."/>
            <person name="Wang W.G."/>
            <person name="Matsuda Y."/>
        </authorList>
    </citation>
    <scope>FUNCTION</scope>
    <scope>CATALYTIC ACTIVITY</scope>
    <scope>PATHWAY</scope>
</reference>
<organism>
    <name type="scientific">Aspergillus aculeatus (strain ATCC 16872 / CBS 172.66 / WB 5094)</name>
    <dbReference type="NCBI Taxonomy" id="690307"/>
    <lineage>
        <taxon>Eukaryota</taxon>
        <taxon>Fungi</taxon>
        <taxon>Dikarya</taxon>
        <taxon>Ascomycota</taxon>
        <taxon>Pezizomycotina</taxon>
        <taxon>Eurotiomycetes</taxon>
        <taxon>Eurotiomycetidae</taxon>
        <taxon>Eurotiales</taxon>
        <taxon>Aspergillaceae</taxon>
        <taxon>Aspergillus</taxon>
        <taxon>Aspergillus subgen. Circumdati</taxon>
    </lineage>
</organism>
<evidence type="ECO:0000250" key="1">
    <source>
        <dbReference type="UniProtKB" id="L0E2Z4"/>
    </source>
</evidence>
<evidence type="ECO:0000250" key="2">
    <source>
        <dbReference type="UniProtKB" id="O93868"/>
    </source>
</evidence>
<evidence type="ECO:0000269" key="3">
    <source>
    </source>
</evidence>
<evidence type="ECO:0000269" key="4">
    <source>
    </source>
</evidence>
<evidence type="ECO:0000269" key="5">
    <source>
    </source>
</evidence>
<evidence type="ECO:0000269" key="6">
    <source>
    </source>
</evidence>
<evidence type="ECO:0000269" key="7">
    <source>
    </source>
</evidence>
<evidence type="ECO:0000269" key="8">
    <source>
    </source>
</evidence>
<evidence type="ECO:0000303" key="9">
    <source>
    </source>
</evidence>
<evidence type="ECO:0000305" key="10"/>
<evidence type="ECO:0000305" key="11">
    <source>
    </source>
</evidence>
<evidence type="ECO:0000305" key="12">
    <source>
    </source>
</evidence>
<protein>
    <recommendedName>
        <fullName evidence="9">Short chain dehydrogenase/reductase AacuD</fullName>
        <shortName evidence="9">SDR AacuD</shortName>
        <ecNumber evidence="11">1.1.1.-</ecNumber>
    </recommendedName>
    <alternativeName>
        <fullName evidence="9">Secalonic acid biosynthesis cluster protein D</fullName>
    </alternativeName>
</protein>
<gene>
    <name evidence="9" type="primary">AacuD</name>
    <name type="ORF">ASPACDRAFT_46505</name>
</gene>
<accession>A0A1L9WLF6</accession>
<keyword id="KW-0521">NADP</keyword>
<keyword id="KW-0560">Oxidoreductase</keyword>
<keyword id="KW-1185">Reference proteome</keyword>
<sequence>MSKFEAFLRPTQTYHSRTYDRISKHHNFNGTGKTILVTGGSSGVGYSICQAFAEADVARIAIVSRSPGPQAAAKAALEAAHPAVQIVTYAASITDHARMAAILAELGPVDVLVLCAAVVHRQVPATAITAAEMQAAFDVNVLAPFHLVQAYLATTTAGTKTVIHVSSAAAQSRSPFRAGYGPSKAAATQVMQHFAAERASPALRVFSFHPGAFYTPSVAEHYAPDSTGWEDINLPAHFARWLAGPESGFLNGRYLWAHWDVDELIALRDRVERDSSFLTIGLVV</sequence>
<comment type="function">
    <text evidence="6 8 12">Short chain dehydrogenase/reductase; part of the gene cluster that mediates the biosynthesis of the tetrahydroxanthone dimer secalonic acid D (PubMed:30996871, PubMed:33891392). The pathway begins with the synthesis of atrochrysone thioester by the polyketide synthase AacuL (Probable). The atrochrysone carboxyl ACP thioesterase AacuM then breaks the thioester bond and releases the atrochrysone carboxylic acid from AacuL (Probable). Atrochrysone carboxylic acid is decarboxylated by the decarboxylase AacuI, and oxidized by the anthrone oxygenase AacuG to yield emodin (Probable). Emodin is then reduced to emodin hydroquinone by a yet unidentified oxidoreductase (Probable). A-ring reduction by the short chain dehydrogenase AacuN, dehydration by the scytalone dehydratase-like protein AacuK and probable spontaneous re-oxidation, results in overall deoxygenation to chrysophanol (PubMed:33891392). Baeyer-Villiger oxidation by the Baeyer-Villiger monooxygenase (BVMO) AacuH then yields monodictyphenone (PubMed:33891392). Monodictyphenone is transformed into compounds with the tetrahydroxanthone skeleton via methylesterification by the methyltransferase AacuQ, followed by the action of the flavin-dependent monooxygenase AacuC, the isomerase AacuP, and the short chain dehydrogenase/reductase AacuF or AacuD (PubMed:33891392). AacuF and AacuD should accept the same compound as a substrate but perform the ketoreduction with a different stereoselectivity, thus yielding blennolides B and A, respectively (PubMed:33891392). In the final step of the biosynthesis, the cytochrome P450 monooxygenase AacuE accepts blennolide B and/or blennolide A to conduct the dimerization reaction to furnish the tetrahydroxanthone dimers, secalonic acids D, B, and F (PubMed:33891392).</text>
</comment>
<comment type="pathway">
    <text evidence="11">Secondary metabolite biosynthesis.</text>
</comment>
<comment type="biotechnology">
    <text evidence="3 4 5 7">Secalonic acids show unprecedented anticancer activities against various human cancer cells and might be interesting for further derivatization, targeting diseases such as cancer.</text>
</comment>
<comment type="similarity">
    <text evidence="10">Belongs to the short-chain dehydrogenases/reductases (SDR) family.</text>
</comment>
<name>AACUD_ASPA1</name>
<proteinExistence type="evidence at protein level"/>
<dbReference type="EC" id="1.1.1.-" evidence="11"/>
<dbReference type="EMBL" id="KV878984">
    <property type="protein sequence ID" value="OJJ96980.1"/>
    <property type="molecule type" value="Genomic_DNA"/>
</dbReference>
<dbReference type="RefSeq" id="XP_020053320.1">
    <property type="nucleotide sequence ID" value="XM_020201798.1"/>
</dbReference>
<dbReference type="SMR" id="A0A1L9WLF6"/>
<dbReference type="GeneID" id="30975612"/>
<dbReference type="VEuPathDB" id="FungiDB:ASPACDRAFT_46505"/>
<dbReference type="OMA" id="QHFAWER"/>
<dbReference type="OrthoDB" id="1933717at2759"/>
<dbReference type="Proteomes" id="UP000184546">
    <property type="component" value="Unassembled WGS sequence"/>
</dbReference>
<dbReference type="GO" id="GO:0050664">
    <property type="term" value="F:oxidoreductase activity, acting on NAD(P)H, oxygen as acceptor"/>
    <property type="evidence" value="ECO:0007669"/>
    <property type="project" value="TreeGrafter"/>
</dbReference>
<dbReference type="GO" id="GO:0016616">
    <property type="term" value="F:oxidoreductase activity, acting on the CH-OH group of donors, NAD or NADP as acceptor"/>
    <property type="evidence" value="ECO:0007669"/>
    <property type="project" value="UniProtKB-ARBA"/>
</dbReference>
<dbReference type="CDD" id="cd05233">
    <property type="entry name" value="SDR_c"/>
    <property type="match status" value="1"/>
</dbReference>
<dbReference type="Gene3D" id="3.40.50.720">
    <property type="entry name" value="NAD(P)-binding Rossmann-like Domain"/>
    <property type="match status" value="1"/>
</dbReference>
<dbReference type="InterPro" id="IPR036291">
    <property type="entry name" value="NAD(P)-bd_dom_sf"/>
</dbReference>
<dbReference type="InterPro" id="IPR002347">
    <property type="entry name" value="SDR_fam"/>
</dbReference>
<dbReference type="PANTHER" id="PTHR43008">
    <property type="entry name" value="BENZIL REDUCTASE"/>
    <property type="match status" value="1"/>
</dbReference>
<dbReference type="PANTHER" id="PTHR43008:SF4">
    <property type="entry name" value="CHAIN DEHYDROGENASE, PUTATIVE (AFU_ORTHOLOGUE AFUA_4G08710)-RELATED"/>
    <property type="match status" value="1"/>
</dbReference>
<dbReference type="Pfam" id="PF00106">
    <property type="entry name" value="adh_short"/>
    <property type="match status" value="1"/>
</dbReference>
<dbReference type="PRINTS" id="PR00081">
    <property type="entry name" value="GDHRDH"/>
</dbReference>
<dbReference type="SMART" id="SM00822">
    <property type="entry name" value="PKS_KR"/>
    <property type="match status" value="1"/>
</dbReference>
<dbReference type="SUPFAM" id="SSF51735">
    <property type="entry name" value="NAD(P)-binding Rossmann-fold domains"/>
    <property type="match status" value="1"/>
</dbReference>